<reference key="1">
    <citation type="journal article" date="2000" name="Nature">
        <title>Sequence and analysis of chromosome 1 of the plant Arabidopsis thaliana.</title>
        <authorList>
            <person name="Theologis A."/>
            <person name="Ecker J.R."/>
            <person name="Palm C.J."/>
            <person name="Federspiel N.A."/>
            <person name="Kaul S."/>
            <person name="White O."/>
            <person name="Alonso J."/>
            <person name="Altafi H."/>
            <person name="Araujo R."/>
            <person name="Bowman C.L."/>
            <person name="Brooks S.Y."/>
            <person name="Buehler E."/>
            <person name="Chan A."/>
            <person name="Chao Q."/>
            <person name="Chen H."/>
            <person name="Cheuk R.F."/>
            <person name="Chin C.W."/>
            <person name="Chung M.K."/>
            <person name="Conn L."/>
            <person name="Conway A.B."/>
            <person name="Conway A.R."/>
            <person name="Creasy T.H."/>
            <person name="Dewar K."/>
            <person name="Dunn P."/>
            <person name="Etgu P."/>
            <person name="Feldblyum T.V."/>
            <person name="Feng J.-D."/>
            <person name="Fong B."/>
            <person name="Fujii C.Y."/>
            <person name="Gill J.E."/>
            <person name="Goldsmith A.D."/>
            <person name="Haas B."/>
            <person name="Hansen N.F."/>
            <person name="Hughes B."/>
            <person name="Huizar L."/>
            <person name="Hunter J.L."/>
            <person name="Jenkins J."/>
            <person name="Johnson-Hopson C."/>
            <person name="Khan S."/>
            <person name="Khaykin E."/>
            <person name="Kim C.J."/>
            <person name="Koo H.L."/>
            <person name="Kremenetskaia I."/>
            <person name="Kurtz D.B."/>
            <person name="Kwan A."/>
            <person name="Lam B."/>
            <person name="Langin-Hooper S."/>
            <person name="Lee A."/>
            <person name="Lee J.M."/>
            <person name="Lenz C.A."/>
            <person name="Li J.H."/>
            <person name="Li Y.-P."/>
            <person name="Lin X."/>
            <person name="Liu S.X."/>
            <person name="Liu Z.A."/>
            <person name="Luros J.S."/>
            <person name="Maiti R."/>
            <person name="Marziali A."/>
            <person name="Militscher J."/>
            <person name="Miranda M."/>
            <person name="Nguyen M."/>
            <person name="Nierman W.C."/>
            <person name="Osborne B.I."/>
            <person name="Pai G."/>
            <person name="Peterson J."/>
            <person name="Pham P.K."/>
            <person name="Rizzo M."/>
            <person name="Rooney T."/>
            <person name="Rowley D."/>
            <person name="Sakano H."/>
            <person name="Salzberg S.L."/>
            <person name="Schwartz J.R."/>
            <person name="Shinn P."/>
            <person name="Southwick A.M."/>
            <person name="Sun H."/>
            <person name="Tallon L.J."/>
            <person name="Tambunga G."/>
            <person name="Toriumi M.J."/>
            <person name="Town C.D."/>
            <person name="Utterback T."/>
            <person name="Van Aken S."/>
            <person name="Vaysberg M."/>
            <person name="Vysotskaia V.S."/>
            <person name="Walker M."/>
            <person name="Wu D."/>
            <person name="Yu G."/>
            <person name="Fraser C.M."/>
            <person name="Venter J.C."/>
            <person name="Davis R.W."/>
        </authorList>
    </citation>
    <scope>NUCLEOTIDE SEQUENCE [LARGE SCALE GENOMIC DNA]</scope>
    <source>
        <strain>cv. Columbia</strain>
    </source>
</reference>
<reference key="2">
    <citation type="journal article" date="2017" name="Plant J.">
        <title>Araport11: a complete reannotation of the Arabidopsis thaliana reference genome.</title>
        <authorList>
            <person name="Cheng C.Y."/>
            <person name="Krishnakumar V."/>
            <person name="Chan A.P."/>
            <person name="Thibaud-Nissen F."/>
            <person name="Schobel S."/>
            <person name="Town C.D."/>
        </authorList>
    </citation>
    <scope>GENOME REANNOTATION</scope>
    <source>
        <strain>cv. Columbia</strain>
    </source>
</reference>
<reference key="3">
    <citation type="journal article" date="2003" name="Science">
        <title>Empirical analysis of transcriptional activity in the Arabidopsis genome.</title>
        <authorList>
            <person name="Yamada K."/>
            <person name="Lim J."/>
            <person name="Dale J.M."/>
            <person name="Chen H."/>
            <person name="Shinn P."/>
            <person name="Palm C.J."/>
            <person name="Southwick A.M."/>
            <person name="Wu H.C."/>
            <person name="Kim C.J."/>
            <person name="Nguyen M."/>
            <person name="Pham P.K."/>
            <person name="Cheuk R.F."/>
            <person name="Karlin-Newmann G."/>
            <person name="Liu S.X."/>
            <person name="Lam B."/>
            <person name="Sakano H."/>
            <person name="Wu T."/>
            <person name="Yu G."/>
            <person name="Miranda M."/>
            <person name="Quach H.L."/>
            <person name="Tripp M."/>
            <person name="Chang C.H."/>
            <person name="Lee J.M."/>
            <person name="Toriumi M.J."/>
            <person name="Chan M.M."/>
            <person name="Tang C.C."/>
            <person name="Onodera C.S."/>
            <person name="Deng J.M."/>
            <person name="Akiyama K."/>
            <person name="Ansari Y."/>
            <person name="Arakawa T."/>
            <person name="Banh J."/>
            <person name="Banno F."/>
            <person name="Bowser L."/>
            <person name="Brooks S.Y."/>
            <person name="Carninci P."/>
            <person name="Chao Q."/>
            <person name="Choy N."/>
            <person name="Enju A."/>
            <person name="Goldsmith A.D."/>
            <person name="Gurjal M."/>
            <person name="Hansen N.F."/>
            <person name="Hayashizaki Y."/>
            <person name="Johnson-Hopson C."/>
            <person name="Hsuan V.W."/>
            <person name="Iida K."/>
            <person name="Karnes M."/>
            <person name="Khan S."/>
            <person name="Koesema E."/>
            <person name="Ishida J."/>
            <person name="Jiang P.X."/>
            <person name="Jones T."/>
            <person name="Kawai J."/>
            <person name="Kamiya A."/>
            <person name="Meyers C."/>
            <person name="Nakajima M."/>
            <person name="Narusaka M."/>
            <person name="Seki M."/>
            <person name="Sakurai T."/>
            <person name="Satou M."/>
            <person name="Tamse R."/>
            <person name="Vaysberg M."/>
            <person name="Wallender E.K."/>
            <person name="Wong C."/>
            <person name="Yamamura Y."/>
            <person name="Yuan S."/>
            <person name="Shinozaki K."/>
            <person name="Davis R.W."/>
            <person name="Theologis A."/>
            <person name="Ecker J.R."/>
        </authorList>
    </citation>
    <scope>NUCLEOTIDE SEQUENCE [LARGE SCALE MRNA]</scope>
    <source>
        <strain>cv. Columbia</strain>
    </source>
</reference>
<reference key="4">
    <citation type="journal article" date="2004" name="Plant Physiol.">
        <title>A novel family of cys-rich membrane proteins mediates cadmium resistance in Arabidopsis.</title>
        <authorList>
            <person name="Song W.Y."/>
            <person name="Martinoia E."/>
            <person name="Lee J."/>
            <person name="Kim D."/>
            <person name="Kim D.Y."/>
            <person name="Vogt E."/>
            <person name="Shim D."/>
            <person name="Choi K.S."/>
            <person name="Hwang I."/>
            <person name="Lee Y."/>
        </authorList>
    </citation>
    <scope>FUNCTION</scope>
    <scope>TISSUE SPECIFICITY</scope>
    <scope>INDUCTION BY CADMIUM</scope>
    <scope>GENE FAMILY</scope>
    <scope>NOMENCLATURE</scope>
</reference>
<reference key="5">
    <citation type="journal article" date="2010" name="Plant Cell">
        <title>Arabidopsis PCR2 is a zinc exporter involved in both zinc extrusion and long-distance zinc transport.</title>
        <authorList>
            <person name="Song W.Y."/>
            <person name="Choi K.S."/>
            <person name="Kim do Y."/>
            <person name="Geisler M."/>
            <person name="Park J."/>
            <person name="Vincenzetti V."/>
            <person name="Schellenberg M."/>
            <person name="Kim S.H."/>
            <person name="Lim Y.P."/>
            <person name="Noh E.W."/>
            <person name="Lee Y."/>
            <person name="Martinoia E."/>
        </authorList>
    </citation>
    <scope>FUNCTION</scope>
    <scope>TISSUE SPECIFICITY</scope>
    <scope>SUBCELLULAR LOCATION</scope>
    <scope>INDUCTION BY ZINC</scope>
    <scope>SUBUNIT</scope>
    <scope>DISRUPTION PHENOTYPE</scope>
</reference>
<keyword id="KW-1003">Cell membrane</keyword>
<keyword id="KW-0472">Membrane</keyword>
<keyword id="KW-1185">Reference proteome</keyword>
<keyword id="KW-0812">Transmembrane</keyword>
<keyword id="KW-1133">Transmembrane helix</keyword>
<comment type="function">
    <text evidence="2 3">Zinc transporter acting in both zinc extrusion and long-distance zinc transport. Involved in the loading of zinc into the xyleme and in the detoxification of excess zinc at the epidermal cells. Acts independently from the zinc transporters HMA2 and HMA4. May be also involved in cadmium resistance.</text>
</comment>
<comment type="subunit">
    <text evidence="3">Homooligomer.</text>
</comment>
<comment type="subcellular location">
    <subcellularLocation>
        <location evidence="3">Cell membrane</location>
        <topology evidence="3">Single-pass membrane protein</topology>
    </subcellularLocation>
</comment>
<comment type="tissue specificity">
    <text evidence="2 3">Expressed in roots, leaves, shoots, stems, flowers and siliques. In leaves, restricted mainly to the vascular tissue. Expressed in all cells in the root tip, in the vascular tissue and the epidermis in the elongation zone, and only in the epidermal cells in the root hair zone.</text>
</comment>
<comment type="induction">
    <text evidence="2 3">Constitutively expressed. Up-regulated in the shoots by cadmium. Down-regulated under zinc deficiency.</text>
</comment>
<comment type="disruption phenotype">
    <text evidence="3">Strongly impaired growth in the presence of heavy metals such as zinc, cadmium, copper or iron.</text>
</comment>
<comment type="similarity">
    <text evidence="4">Belongs to the cornifelin family.</text>
</comment>
<name>PCR2_ARATH</name>
<organism>
    <name type="scientific">Arabidopsis thaliana</name>
    <name type="common">Mouse-ear cress</name>
    <dbReference type="NCBI Taxonomy" id="3702"/>
    <lineage>
        <taxon>Eukaryota</taxon>
        <taxon>Viridiplantae</taxon>
        <taxon>Streptophyta</taxon>
        <taxon>Embryophyta</taxon>
        <taxon>Tracheophyta</taxon>
        <taxon>Spermatophyta</taxon>
        <taxon>Magnoliopsida</taxon>
        <taxon>eudicotyledons</taxon>
        <taxon>Gunneridae</taxon>
        <taxon>Pentapetalae</taxon>
        <taxon>rosids</taxon>
        <taxon>malvids</taxon>
        <taxon>Brassicales</taxon>
        <taxon>Brassicaceae</taxon>
        <taxon>Camelineae</taxon>
        <taxon>Arabidopsis</taxon>
    </lineage>
</organism>
<accession>Q9LQU4</accession>
<sequence length="152" mass="16742">MEAQHLHAKPHAEGEWSTGFCDCFSDCKNCCITFWCPCITFGQVAEIVDRGSTSCGTAGALYALIAVVTGCACIYSCFYRGKMRAQYNIKGDDCTDCLKHFCCELCSLTQQYRELKHRGYDMSLGWAGNVERQQNQGGVAMGAPVFQGGMTR</sequence>
<evidence type="ECO:0000255" key="1"/>
<evidence type="ECO:0000269" key="2">
    <source>
    </source>
</evidence>
<evidence type="ECO:0000269" key="3">
    <source>
    </source>
</evidence>
<evidence type="ECO:0000305" key="4"/>
<proteinExistence type="evidence at protein level"/>
<feature type="chain" id="PRO_0000300105" description="Protein PLANT CADMIUM RESISTANCE 2">
    <location>
        <begin position="1"/>
        <end position="152"/>
    </location>
</feature>
<feature type="transmembrane region" description="Helical" evidence="1">
    <location>
        <begin position="57"/>
        <end position="79"/>
    </location>
</feature>
<protein>
    <recommendedName>
        <fullName>Protein PLANT CADMIUM RESISTANCE 2</fullName>
        <shortName>AtPCR2</shortName>
    </recommendedName>
</protein>
<dbReference type="EMBL" id="AC006917">
    <property type="protein sequence ID" value="AAF79235.1"/>
    <property type="molecule type" value="Genomic_DNA"/>
</dbReference>
<dbReference type="EMBL" id="CP002684">
    <property type="protein sequence ID" value="AEE29237.1"/>
    <property type="molecule type" value="Genomic_DNA"/>
</dbReference>
<dbReference type="EMBL" id="AY072397">
    <property type="protein sequence ID" value="AAL62389.1"/>
    <property type="molecule type" value="mRNA"/>
</dbReference>
<dbReference type="EMBL" id="AY114701">
    <property type="protein sequence ID" value="AAM48020.1"/>
    <property type="molecule type" value="mRNA"/>
</dbReference>
<dbReference type="RefSeq" id="NP_172940.1">
    <property type="nucleotide sequence ID" value="NM_101356.5"/>
</dbReference>
<dbReference type="BioGRID" id="23292">
    <property type="interactions" value="4"/>
</dbReference>
<dbReference type="FunCoup" id="Q9LQU4">
    <property type="interactions" value="148"/>
</dbReference>
<dbReference type="IntAct" id="Q9LQU4">
    <property type="interactions" value="1"/>
</dbReference>
<dbReference type="STRING" id="3702.Q9LQU4"/>
<dbReference type="TCDB" id="1.A.87.3.8">
    <property type="family name" value="the mechanosensitive calcium channel (mca) family"/>
</dbReference>
<dbReference type="SwissPalm" id="Q9LQU4"/>
<dbReference type="PaxDb" id="3702-AT1G14870.1"/>
<dbReference type="ProteomicsDB" id="234949"/>
<dbReference type="EnsemblPlants" id="AT1G14870.1">
    <property type="protein sequence ID" value="AT1G14870.1"/>
    <property type="gene ID" value="AT1G14870"/>
</dbReference>
<dbReference type="GeneID" id="838052"/>
<dbReference type="Gramene" id="AT1G14870.1">
    <property type="protein sequence ID" value="AT1G14870.1"/>
    <property type="gene ID" value="AT1G14870"/>
</dbReference>
<dbReference type="KEGG" id="ath:AT1G14870"/>
<dbReference type="Araport" id="AT1G14870"/>
<dbReference type="TAIR" id="AT1G14870">
    <property type="gene designation" value="PCR2"/>
</dbReference>
<dbReference type="eggNOG" id="ENOG502S7UD">
    <property type="taxonomic scope" value="Eukaryota"/>
</dbReference>
<dbReference type="HOGENOM" id="CLU_083147_1_0_1"/>
<dbReference type="InParanoid" id="Q9LQU4"/>
<dbReference type="OMA" id="CVTCCPC"/>
<dbReference type="OrthoDB" id="1045822at2759"/>
<dbReference type="PhylomeDB" id="Q9LQU4"/>
<dbReference type="PRO" id="PR:Q9LQU4"/>
<dbReference type="Proteomes" id="UP000006548">
    <property type="component" value="Chromosome 1"/>
</dbReference>
<dbReference type="ExpressionAtlas" id="Q9LQU4">
    <property type="expression patterns" value="baseline and differential"/>
</dbReference>
<dbReference type="GO" id="GO:0005886">
    <property type="term" value="C:plasma membrane"/>
    <property type="evidence" value="ECO:0000314"/>
    <property type="project" value="TAIR"/>
</dbReference>
<dbReference type="GO" id="GO:0006979">
    <property type="term" value="P:response to oxidative stress"/>
    <property type="evidence" value="ECO:0000315"/>
    <property type="project" value="TAIR"/>
</dbReference>
<dbReference type="InterPro" id="IPR006461">
    <property type="entry name" value="PLAC_motif_containing"/>
</dbReference>
<dbReference type="NCBIfam" id="TIGR01571">
    <property type="entry name" value="A_thal_Cys_rich"/>
    <property type="match status" value="1"/>
</dbReference>
<dbReference type="PANTHER" id="PTHR15907">
    <property type="entry name" value="DUF614 FAMILY PROTEIN-RELATED"/>
    <property type="match status" value="1"/>
</dbReference>
<dbReference type="Pfam" id="PF04749">
    <property type="entry name" value="PLAC8"/>
    <property type="match status" value="1"/>
</dbReference>
<dbReference type="PROSITE" id="PS00010">
    <property type="entry name" value="ASX_HYDROXYL"/>
    <property type="match status" value="1"/>
</dbReference>
<gene>
    <name type="primary">PCR2</name>
    <name type="ordered locus">At1g14870</name>
    <name type="ORF">F10B6.27</name>
</gene>